<feature type="chain" id="PRO_0000429595" description="Serine/arginine-rich splicing factor SR30">
    <location>
        <begin position="1"/>
        <end position="268"/>
    </location>
</feature>
<feature type="domain" description="RRM 1" evidence="7">
    <location>
        <begin position="7"/>
        <end position="82"/>
    </location>
</feature>
<feature type="domain" description="RRM 2" evidence="7">
    <location>
        <begin position="109"/>
        <end position="187"/>
    </location>
</feature>
<feature type="region of interest" description="Disordered" evidence="8">
    <location>
        <begin position="186"/>
        <end position="268"/>
    </location>
</feature>
<feature type="compositionally biased region" description="Basic and acidic residues" evidence="8">
    <location>
        <begin position="186"/>
        <end position="199"/>
    </location>
</feature>
<feature type="compositionally biased region" description="Low complexity" evidence="8">
    <location>
        <begin position="207"/>
        <end position="247"/>
    </location>
</feature>
<feature type="compositionally biased region" description="Low complexity" evidence="8">
    <location>
        <begin position="257"/>
        <end position="268"/>
    </location>
</feature>
<feature type="modified residue" description="Phosphoserine" evidence="1">
    <location>
        <position position="193"/>
    </location>
</feature>
<feature type="modified residue" description="Phosphoserine" evidence="2">
    <location>
        <position position="210"/>
    </location>
</feature>
<feature type="modified residue" description="Phosphoserine" evidence="4">
    <location>
        <position position="212"/>
    </location>
</feature>
<feature type="modified residue" description="Phosphoserine" evidence="4">
    <location>
        <position position="214"/>
    </location>
</feature>
<feature type="modified residue" description="Phosphoserine" evidence="1">
    <location>
        <position position="219"/>
    </location>
</feature>
<feature type="modified residue" description="Phosphoserine" evidence="5">
    <location>
        <position position="221"/>
    </location>
</feature>
<feature type="modified residue" description="Phosphoserine" evidence="3">
    <location>
        <position position="227"/>
    </location>
</feature>
<feature type="modified residue" description="Phosphoserine" evidence="6">
    <location>
        <position position="236"/>
    </location>
</feature>
<feature type="modified residue" description="Phosphoserine" evidence="2">
    <location>
        <position position="246"/>
    </location>
</feature>
<feature type="modified residue" description="Phosphoserine" evidence="5">
    <location>
        <position position="256"/>
    </location>
</feature>
<feature type="modified residue" description="Phosphoserine" evidence="3">
    <location>
        <position position="260"/>
    </location>
</feature>
<feature type="splice variant" id="VSP_054988" description="In isoform 2." evidence="19">
    <original>QSRSKSRSRS</original>
    <variation>GSLLRAGDWI</variation>
    <location>
        <begin position="247"/>
        <end position="256"/>
    </location>
</feature>
<feature type="splice variant" id="VSP_054989" description="In isoform 2." evidence="19">
    <location>
        <begin position="257"/>
        <end position="268"/>
    </location>
</feature>
<feature type="sequence conflict" description="In Ref. 4; AAK93589." evidence="20" ref="4">
    <original>R</original>
    <variation>H</variation>
    <location>
        <position position="110"/>
    </location>
</feature>
<feature type="sequence conflict" description="In Ref. 4; AAK93589." evidence="20" ref="4">
    <original>S</original>
    <variation>T</variation>
    <location>
        <position position="254"/>
    </location>
</feature>
<accession>Q9XFR5</accession>
<accession>Q949S8</accession>
<accession>Q9XFR6</accession>
<comment type="function">
    <text evidence="9">Regulatory splicing factor that modulates alternative splicing and gene expression in specific cell types. Autoregulates its own expression. Probably involved in intron recognition and spliceosome assembly.</text>
</comment>
<comment type="subunit">
    <text evidence="12 13 14">Component of the spliceosome. Interacts with SNRNP35, CYP59 and CYP63.</text>
</comment>
<comment type="interaction">
    <interactant intactId="EBI-1540237">
        <id>Q9XFR5</id>
    </interactant>
    <interactant intactId="EBI-2360522">
        <id>Q9LY75</id>
        <label>CYP63</label>
    </interactant>
    <organismsDiffer>false</organismsDiffer>
    <experiments>4</experiments>
</comment>
<comment type="subcellular location">
    <subcellularLocation>
        <location evidence="10 11 17">Nucleus speckle</location>
    </subcellularLocation>
    <subcellularLocation>
        <location evidence="10 11 17">Nucleus</location>
        <location evidence="10 11 17">Nucleoplasm</location>
    </subcellularLocation>
    <subcellularLocation>
        <location evidence="17">Cytoplasm</location>
    </subcellularLocation>
    <text evidence="17">Inhibition of phosphorylation causes suppression of nuclear localization.</text>
</comment>
<comment type="alternative products">
    <event type="alternative splicing"/>
    <isoform>
        <id>Q9XFR5-1</id>
        <name>1</name>
        <sequence type="displayed"/>
    </isoform>
    <isoform>
        <id>Q9XFR5-2</id>
        <name>2</name>
        <sequence type="described" ref="VSP_054988 VSP_054989"/>
    </isoform>
</comment>
<comment type="tissue specificity">
    <text evidence="9 10">Ubiquitous.</text>
</comment>
<comment type="induction">
    <text evidence="15 16 18">Up-regulated by paraquat, high salt and early after high-light irradiation. Down-regulated by cold.</text>
</comment>
<comment type="PTM">
    <text evidence="9 17">Phosphorylated.</text>
</comment>
<comment type="miscellaneous">
    <text evidence="21 22 23 24">The splicing pattern of the pre-mRNA is regulated in a tissue-specific manner and by development, and changes in response to various types of stress treatment (PubMed:10215626, PubMed:17556373, PubMed:17319848) or light regimes (PubMed:24763593).</text>
</comment>
<comment type="miscellaneous">
    <text evidence="24">A mobile signal generated in the leaves triggers root alternative splicing responses to light.</text>
</comment>
<comment type="similarity">
    <text evidence="20">Belongs to the splicing factor SR family. SR subfamily.</text>
</comment>
<sequence>MSSRWNRTIYVGNLPGDIRKCEVEDLFYKYGPIVDIDLKIPPRPPGYAFVEFEDPRDADDAIYGRDGYDFDGCRLRVEIAHGGRRFSPSVDRYSSSYSASRAPSRRSDYRVLVTGLPPSASWQDLKDHMRKAGDVCFSEVFPDRKGMSGVVDYSNYDDMKYAIRKLDATEFRNAFSSAYIRVREYESRSVSRSPDDSKSYRSRSRSRGPSCSYSSKSRSVSPARSISPRSRPLSRSRSLYSSVSRSQSRSKSRSRSRSNSPVSPVISG</sequence>
<evidence type="ECO:0000250" key="1">
    <source>
        <dbReference type="UniProtKB" id="P92964"/>
    </source>
</evidence>
<evidence type="ECO:0000250" key="2">
    <source>
        <dbReference type="UniProtKB" id="P92965"/>
    </source>
</evidence>
<evidence type="ECO:0000250" key="3">
    <source>
        <dbReference type="UniProtKB" id="P92966"/>
    </source>
</evidence>
<evidence type="ECO:0000250" key="4">
    <source>
        <dbReference type="UniProtKB" id="Q8VYA5"/>
    </source>
</evidence>
<evidence type="ECO:0000250" key="5">
    <source>
        <dbReference type="UniProtKB" id="Q9FYB7"/>
    </source>
</evidence>
<evidence type="ECO:0000250" key="6">
    <source>
        <dbReference type="UniProtKB" id="Q9SJA6"/>
    </source>
</evidence>
<evidence type="ECO:0000255" key="7">
    <source>
        <dbReference type="PROSITE-ProRule" id="PRU00176"/>
    </source>
</evidence>
<evidence type="ECO:0000256" key="8">
    <source>
        <dbReference type="SAM" id="MobiDB-lite"/>
    </source>
</evidence>
<evidence type="ECO:0000269" key="9">
    <source>
    </source>
</evidence>
<evidence type="ECO:0000269" key="10">
    <source>
    </source>
</evidence>
<evidence type="ECO:0000269" key="11">
    <source>
    </source>
</evidence>
<evidence type="ECO:0000269" key="12">
    <source>
    </source>
</evidence>
<evidence type="ECO:0000269" key="13">
    <source>
    </source>
</evidence>
<evidence type="ECO:0000269" key="14">
    <source>
    </source>
</evidence>
<evidence type="ECO:0000269" key="15">
    <source>
    </source>
</evidence>
<evidence type="ECO:0000269" key="16">
    <source>
    </source>
</evidence>
<evidence type="ECO:0000269" key="17">
    <source>
    </source>
</evidence>
<evidence type="ECO:0000269" key="18">
    <source>
    </source>
</evidence>
<evidence type="ECO:0000303" key="19">
    <source>
    </source>
</evidence>
<evidence type="ECO:0000305" key="20"/>
<evidence type="ECO:0000305" key="21">
    <source>
    </source>
</evidence>
<evidence type="ECO:0000305" key="22">
    <source>
    </source>
</evidence>
<evidence type="ECO:0000305" key="23">
    <source>
    </source>
</evidence>
<evidence type="ECO:0000305" key="24">
    <source>
    </source>
</evidence>
<organism>
    <name type="scientific">Arabidopsis thaliana</name>
    <name type="common">Mouse-ear cress</name>
    <dbReference type="NCBI Taxonomy" id="3702"/>
    <lineage>
        <taxon>Eukaryota</taxon>
        <taxon>Viridiplantae</taxon>
        <taxon>Streptophyta</taxon>
        <taxon>Embryophyta</taxon>
        <taxon>Tracheophyta</taxon>
        <taxon>Spermatophyta</taxon>
        <taxon>Magnoliopsida</taxon>
        <taxon>eudicotyledons</taxon>
        <taxon>Gunneridae</taxon>
        <taxon>Pentapetalae</taxon>
        <taxon>rosids</taxon>
        <taxon>malvids</taxon>
        <taxon>Brassicales</taxon>
        <taxon>Brassicaceae</taxon>
        <taxon>Camelineae</taxon>
        <taxon>Arabidopsis</taxon>
    </lineage>
</organism>
<name>SR30_ARATH</name>
<protein>
    <recommendedName>
        <fullName>Serine/arginine-rich splicing factor SR30</fullName>
        <shortName>At-SR30</shortName>
        <shortName>At-SRp30</shortName>
        <shortName>AtSR30</shortName>
    </recommendedName>
    <alternativeName>
        <fullName>SF2/ASF-like splicing modulator Srp30</fullName>
    </alternativeName>
    <alternativeName>
        <fullName>Serine-arginine rich RNA binding protein 30</fullName>
    </alternativeName>
</protein>
<keyword id="KW-0025">Alternative splicing</keyword>
<keyword id="KW-0963">Cytoplasm</keyword>
<keyword id="KW-0507">mRNA processing</keyword>
<keyword id="KW-0508">mRNA splicing</keyword>
<keyword id="KW-0539">Nucleus</keyword>
<keyword id="KW-0597">Phosphoprotein</keyword>
<keyword id="KW-1185">Reference proteome</keyword>
<keyword id="KW-0677">Repeat</keyword>
<keyword id="KW-0694">RNA-binding</keyword>
<keyword id="KW-0747">Spliceosome</keyword>
<proteinExistence type="evidence at protein level"/>
<gene>
    <name type="primary">SR30</name>
    <name type="synonym">SRP30</name>
    <name type="ordered locus">At1g09140</name>
    <name type="ORF">T12M4.19</name>
</gene>
<reference key="1">
    <citation type="journal article" date="1999" name="Genes Dev.">
        <title>atSRp30, one of two SF2/ASF-like proteins from Arabidopsis thaliana, regulates splicing of specific plant genes.</title>
        <authorList>
            <person name="Lopato S."/>
            <person name="Kalyna M."/>
            <person name="Dorner S."/>
            <person name="Kobayashi R."/>
            <person name="Krainer A.R."/>
            <person name="Barta A."/>
        </authorList>
    </citation>
    <scope>NUCLEOTIDE SEQUENCE [GENOMIC DNA / MRNA] (ISOFORMS 1 AND 2)</scope>
    <scope>FUNCTION</scope>
    <scope>ALTERNATIVE SPLICING</scope>
    <scope>TISSUE SPECIFICITY</scope>
    <scope>PHOSPHORYLATION</scope>
</reference>
<reference key="2">
    <citation type="journal article" date="2000" name="Nature">
        <title>Sequence and analysis of chromosome 1 of the plant Arabidopsis thaliana.</title>
        <authorList>
            <person name="Theologis A."/>
            <person name="Ecker J.R."/>
            <person name="Palm C.J."/>
            <person name="Federspiel N.A."/>
            <person name="Kaul S."/>
            <person name="White O."/>
            <person name="Alonso J."/>
            <person name="Altafi H."/>
            <person name="Araujo R."/>
            <person name="Bowman C.L."/>
            <person name="Brooks S.Y."/>
            <person name="Buehler E."/>
            <person name="Chan A."/>
            <person name="Chao Q."/>
            <person name="Chen H."/>
            <person name="Cheuk R.F."/>
            <person name="Chin C.W."/>
            <person name="Chung M.K."/>
            <person name="Conn L."/>
            <person name="Conway A.B."/>
            <person name="Conway A.R."/>
            <person name="Creasy T.H."/>
            <person name="Dewar K."/>
            <person name="Dunn P."/>
            <person name="Etgu P."/>
            <person name="Feldblyum T.V."/>
            <person name="Feng J.-D."/>
            <person name="Fong B."/>
            <person name="Fujii C.Y."/>
            <person name="Gill J.E."/>
            <person name="Goldsmith A.D."/>
            <person name="Haas B."/>
            <person name="Hansen N.F."/>
            <person name="Hughes B."/>
            <person name="Huizar L."/>
            <person name="Hunter J.L."/>
            <person name="Jenkins J."/>
            <person name="Johnson-Hopson C."/>
            <person name="Khan S."/>
            <person name="Khaykin E."/>
            <person name="Kim C.J."/>
            <person name="Koo H.L."/>
            <person name="Kremenetskaia I."/>
            <person name="Kurtz D.B."/>
            <person name="Kwan A."/>
            <person name="Lam B."/>
            <person name="Langin-Hooper S."/>
            <person name="Lee A."/>
            <person name="Lee J.M."/>
            <person name="Lenz C.A."/>
            <person name="Li J.H."/>
            <person name="Li Y.-P."/>
            <person name="Lin X."/>
            <person name="Liu S.X."/>
            <person name="Liu Z.A."/>
            <person name="Luros J.S."/>
            <person name="Maiti R."/>
            <person name="Marziali A."/>
            <person name="Militscher J."/>
            <person name="Miranda M."/>
            <person name="Nguyen M."/>
            <person name="Nierman W.C."/>
            <person name="Osborne B.I."/>
            <person name="Pai G."/>
            <person name="Peterson J."/>
            <person name="Pham P.K."/>
            <person name="Rizzo M."/>
            <person name="Rooney T."/>
            <person name="Rowley D."/>
            <person name="Sakano H."/>
            <person name="Salzberg S.L."/>
            <person name="Schwartz J.R."/>
            <person name="Shinn P."/>
            <person name="Southwick A.M."/>
            <person name="Sun H."/>
            <person name="Tallon L.J."/>
            <person name="Tambunga G."/>
            <person name="Toriumi M.J."/>
            <person name="Town C.D."/>
            <person name="Utterback T."/>
            <person name="Van Aken S."/>
            <person name="Vaysberg M."/>
            <person name="Vysotskaia V.S."/>
            <person name="Walker M."/>
            <person name="Wu D."/>
            <person name="Yu G."/>
            <person name="Fraser C.M."/>
            <person name="Venter J.C."/>
            <person name="Davis R.W."/>
        </authorList>
    </citation>
    <scope>NUCLEOTIDE SEQUENCE [LARGE SCALE GENOMIC DNA]</scope>
    <source>
        <strain>cv. Columbia</strain>
    </source>
</reference>
<reference key="3">
    <citation type="journal article" date="2017" name="Plant J.">
        <title>Araport11: a complete reannotation of the Arabidopsis thaliana reference genome.</title>
        <authorList>
            <person name="Cheng C.Y."/>
            <person name="Krishnakumar V."/>
            <person name="Chan A.P."/>
            <person name="Thibaud-Nissen F."/>
            <person name="Schobel S."/>
            <person name="Town C.D."/>
        </authorList>
    </citation>
    <scope>GENOME REANNOTATION</scope>
    <source>
        <strain>cv. Columbia</strain>
    </source>
</reference>
<reference key="4">
    <citation type="journal article" date="2003" name="Science">
        <title>Empirical analysis of transcriptional activity in the Arabidopsis genome.</title>
        <authorList>
            <person name="Yamada K."/>
            <person name="Lim J."/>
            <person name="Dale J.M."/>
            <person name="Chen H."/>
            <person name="Shinn P."/>
            <person name="Palm C.J."/>
            <person name="Southwick A.M."/>
            <person name="Wu H.C."/>
            <person name="Kim C.J."/>
            <person name="Nguyen M."/>
            <person name="Pham P.K."/>
            <person name="Cheuk R.F."/>
            <person name="Karlin-Newmann G."/>
            <person name="Liu S.X."/>
            <person name="Lam B."/>
            <person name="Sakano H."/>
            <person name="Wu T."/>
            <person name="Yu G."/>
            <person name="Miranda M."/>
            <person name="Quach H.L."/>
            <person name="Tripp M."/>
            <person name="Chang C.H."/>
            <person name="Lee J.M."/>
            <person name="Toriumi M.J."/>
            <person name="Chan M.M."/>
            <person name="Tang C.C."/>
            <person name="Onodera C.S."/>
            <person name="Deng J.M."/>
            <person name="Akiyama K."/>
            <person name="Ansari Y."/>
            <person name="Arakawa T."/>
            <person name="Banh J."/>
            <person name="Banno F."/>
            <person name="Bowser L."/>
            <person name="Brooks S.Y."/>
            <person name="Carninci P."/>
            <person name="Chao Q."/>
            <person name="Choy N."/>
            <person name="Enju A."/>
            <person name="Goldsmith A.D."/>
            <person name="Gurjal M."/>
            <person name="Hansen N.F."/>
            <person name="Hayashizaki Y."/>
            <person name="Johnson-Hopson C."/>
            <person name="Hsuan V.W."/>
            <person name="Iida K."/>
            <person name="Karnes M."/>
            <person name="Khan S."/>
            <person name="Koesema E."/>
            <person name="Ishida J."/>
            <person name="Jiang P.X."/>
            <person name="Jones T."/>
            <person name="Kawai J."/>
            <person name="Kamiya A."/>
            <person name="Meyers C."/>
            <person name="Nakajima M."/>
            <person name="Narusaka M."/>
            <person name="Seki M."/>
            <person name="Sakurai T."/>
            <person name="Satou M."/>
            <person name="Tamse R."/>
            <person name="Vaysberg M."/>
            <person name="Wallender E.K."/>
            <person name="Wong C."/>
            <person name="Yamamura Y."/>
            <person name="Yuan S."/>
            <person name="Shinozaki K."/>
            <person name="Davis R.W."/>
            <person name="Theologis A."/>
            <person name="Ecker J.R."/>
        </authorList>
    </citation>
    <scope>NUCLEOTIDE SEQUENCE [LARGE SCALE MRNA] (ISOFORM 1)</scope>
    <source>
        <strain>cv. Columbia</strain>
    </source>
</reference>
<reference key="5">
    <citation type="journal article" date="2004" name="J. Biol. Chem.">
        <title>Interactions of Arabidopsis RS domain containing cyclophilins with SR proteins and U1 and U11 small nuclear ribonucleoprotein-specific proteins suggest their involvement in pre-mRNA Splicing.</title>
        <authorList>
            <person name="Lorkovic Z.J."/>
            <person name="Lopato S."/>
            <person name="Pexa M."/>
            <person name="Lehner R."/>
            <person name="Barta A."/>
        </authorList>
    </citation>
    <scope>INTERACTION WITH CYP63</scope>
</reference>
<reference key="6">
    <citation type="journal article" date="2004" name="Mol. Biol. Cell">
        <title>Tissue-specific expression and dynamic organization of SR splicing factors in Arabidopsis.</title>
        <authorList>
            <person name="Fang Y."/>
            <person name="Hearn S."/>
            <person name="Spector D.L."/>
        </authorList>
    </citation>
    <scope>TISSUE SPECIFICITY</scope>
    <scope>SUBCELLULAR LOCATION</scope>
</reference>
<reference key="7">
    <citation type="journal article" date="2004" name="Mol. Biol. Cell">
        <title>Use of fluorescent protein tags to study nuclear organization of the spliceosomal machinery in transiently transformed living plant cells.</title>
        <authorList>
            <person name="Lorkovic Z.J."/>
            <person name="Hilscher J."/>
            <person name="Barta A."/>
        </authorList>
    </citation>
    <scope>SUBCELLULAR LOCATION</scope>
</reference>
<reference key="8">
    <citation type="journal article" date="2005" name="RNA">
        <title>Evolutionary conservation of minor U12-type spliceosome between plants and humans.</title>
        <authorList>
            <person name="Lorkovic Z.J."/>
            <person name="Lehner R."/>
            <person name="Forstner C."/>
            <person name="Barta A."/>
        </authorList>
    </citation>
    <scope>INTERACTION WITH SNRNP35</scope>
</reference>
<reference key="9">
    <citation type="journal article" date="2006" name="RNA">
        <title>AtCyp59 is a multidomain cyclophilin from Arabidopsis thaliana that interacts with SR proteins and the C-terminal domain of the RNA polymerase II.</title>
        <authorList>
            <person name="Gullerova M."/>
            <person name="Barta A."/>
            <person name="Lorkovic Z.J."/>
        </authorList>
    </citation>
    <scope>INTERACTION WITH CYP59</scope>
</reference>
<reference key="10">
    <citation type="journal article" date="2007" name="Plant Cell Physiol.">
        <title>Differential expression of alternatively spliced mRNAs of Arabidopsis SR protein homologs, atSR30 and atSR45a, in response to environmental stress.</title>
        <authorList>
            <person name="Tanabe N."/>
            <person name="Yoshimura K."/>
            <person name="Kimura A."/>
            <person name="Yabuta Y."/>
            <person name="Shigeoka S."/>
        </authorList>
    </citation>
    <scope>ALTERNATIVE SPLICING</scope>
    <scope>INDUCTION BY HIGH-LIGHT; PARAQUAT; COLD AND SALT STRESS</scope>
</reference>
<reference key="11">
    <citation type="journal article" date="2007" name="Plant J.">
        <title>Alternative splicing of pre-mRNAs of Arabidopsis serine/arginine-rich proteins: regulation by hormones and stresses.</title>
        <authorList>
            <person name="Palusa S.G."/>
            <person name="Ali G.S."/>
            <person name="Reddy A.S."/>
        </authorList>
    </citation>
    <scope>ALTERNATIVE SPLICING</scope>
    <scope>INDUCTION</scope>
</reference>
<reference key="12">
    <citation type="journal article" date="2009" name="Plant Physiol.">
        <title>Plant SMU-1 and SMU-2 homologues regulate pre-mRNA splicing and multiple aspects of development.</title>
        <authorList>
            <person name="Chung T."/>
            <person name="Wang D."/>
            <person name="Kim C.S."/>
            <person name="Yadegari R."/>
            <person name="Larkins B.A."/>
        </authorList>
    </citation>
    <scope>ALTERNATIVE SPLICING</scope>
</reference>
<reference key="13">
    <citation type="journal article" date="2010" name="Plant Cell">
        <title>Implementing a rational and consistent nomenclature for serine/arginine-rich protein splicing factors (SR proteins) in plants.</title>
        <authorList>
            <person name="Barta A."/>
            <person name="Kalyna M."/>
            <person name="Reddy A.S."/>
        </authorList>
    </citation>
    <scope>GENE FAMILY</scope>
    <scope>NOMENCLATURE</scope>
</reference>
<reference key="14">
    <citation type="journal article" date="2011" name="PLoS ONE">
        <title>Comparative analysis of serine/arginine-rich proteins across 27 eukaryotes: insights into sub-family classification and extent of alternative splicing.</title>
        <authorList>
            <person name="Richardson D.N."/>
            <person name="Rogers M.F."/>
            <person name="Labadorf A."/>
            <person name="Ben-Hur A."/>
            <person name="Guo H."/>
            <person name="Paterson A.H."/>
            <person name="Reddy A.S.N."/>
        </authorList>
    </citation>
    <scope>GENE FAMILY</scope>
</reference>
<reference key="15">
    <citation type="journal article" date="2012" name="Biosci. Biotechnol. Biochem.">
        <title>Subcellular and subnuclear distribution of high-light responsive serine/arginine-rich proteins, atSR45a and atSR30, in Arabidopsis thaliana.</title>
        <authorList>
            <person name="Mori T."/>
            <person name="Yoshimura K."/>
            <person name="Nosaka R."/>
            <person name="Sakuyama H."/>
            <person name="Koike Y."/>
            <person name="Tanabe N."/>
            <person name="Maruta T."/>
            <person name="Tamoi M."/>
            <person name="Shigeoka S."/>
        </authorList>
    </citation>
    <scope>SUBCELLULAR LOCATION</scope>
    <scope>PHOSPHORYLATION</scope>
</reference>
<reference key="16">
    <citation type="journal article" date="2014" name="Science">
        <title>A chloroplast retrograde signal regulates nuclear alternative splicing.</title>
        <authorList>
            <person name="Petrillo E."/>
            <person name="Herz M.A."/>
            <person name="Fuchs A."/>
            <person name="Reifer D."/>
            <person name="Fuller J."/>
            <person name="Yanovsky M.J."/>
            <person name="Simpson C."/>
            <person name="Brown J.W."/>
            <person name="Barta A."/>
            <person name="Kalyna M."/>
            <person name="Kornblihtt A.R."/>
        </authorList>
    </citation>
    <scope>INDUCTION</scope>
</reference>
<dbReference type="EMBL" id="AJ131214">
    <property type="protein sequence ID" value="CAB42557.1"/>
    <property type="molecule type" value="Genomic_DNA"/>
</dbReference>
<dbReference type="EMBL" id="AJ131214">
    <property type="protein sequence ID" value="CAB42558.1"/>
    <property type="molecule type" value="Genomic_DNA"/>
</dbReference>
<dbReference type="EMBL" id="AC003114">
    <property type="status" value="NOT_ANNOTATED_CDS"/>
    <property type="molecule type" value="Genomic_DNA"/>
</dbReference>
<dbReference type="EMBL" id="CP002684">
    <property type="protein sequence ID" value="AEE28400.1"/>
    <property type="molecule type" value="Genomic_DNA"/>
</dbReference>
<dbReference type="EMBL" id="CP002684">
    <property type="protein sequence ID" value="AEE28401.1"/>
    <property type="molecule type" value="Genomic_DNA"/>
</dbReference>
<dbReference type="EMBL" id="AY150486">
    <property type="protein sequence ID" value="AAN13011.1"/>
    <property type="molecule type" value="mRNA"/>
</dbReference>
<dbReference type="EMBL" id="AY050912">
    <property type="protein sequence ID" value="AAK93589.2"/>
    <property type="molecule type" value="mRNA"/>
</dbReference>
<dbReference type="RefSeq" id="NP_172386.3">
    <molecule id="Q9XFR5-1"/>
    <property type="nucleotide sequence ID" value="NM_100783.6"/>
</dbReference>
<dbReference type="RefSeq" id="NP_683288.2">
    <molecule id="Q9XFR5-2"/>
    <property type="nucleotide sequence ID" value="NM_148447.4"/>
</dbReference>
<dbReference type="SMR" id="Q9XFR5"/>
<dbReference type="BioGRID" id="22674">
    <property type="interactions" value="14"/>
</dbReference>
<dbReference type="FunCoup" id="Q9XFR5">
    <property type="interactions" value="4029"/>
</dbReference>
<dbReference type="IntAct" id="Q9XFR5">
    <property type="interactions" value="13"/>
</dbReference>
<dbReference type="STRING" id="3702.Q9XFR5"/>
<dbReference type="iPTMnet" id="Q9XFR5"/>
<dbReference type="PaxDb" id="3702-AT1G09140.1"/>
<dbReference type="ProteomicsDB" id="226765">
    <molecule id="Q9XFR5-1"/>
</dbReference>
<dbReference type="EnsemblPlants" id="AT1G09140.1">
    <molecule id="Q9XFR5-1"/>
    <property type="protein sequence ID" value="AT1G09140.1"/>
    <property type="gene ID" value="AT1G09140"/>
</dbReference>
<dbReference type="EnsemblPlants" id="AT1G09140.2">
    <molecule id="Q9XFR5-2"/>
    <property type="protein sequence ID" value="AT1G09140.2"/>
    <property type="gene ID" value="AT1G09140"/>
</dbReference>
<dbReference type="GeneID" id="837433"/>
<dbReference type="Gramene" id="AT1G09140.1">
    <molecule id="Q9XFR5-1"/>
    <property type="protein sequence ID" value="AT1G09140.1"/>
    <property type="gene ID" value="AT1G09140"/>
</dbReference>
<dbReference type="Gramene" id="AT1G09140.2">
    <molecule id="Q9XFR5-2"/>
    <property type="protein sequence ID" value="AT1G09140.2"/>
    <property type="gene ID" value="AT1G09140"/>
</dbReference>
<dbReference type="KEGG" id="ath:AT1G09140"/>
<dbReference type="Araport" id="AT1G09140"/>
<dbReference type="TAIR" id="AT1G09140">
    <property type="gene designation" value="SR30"/>
</dbReference>
<dbReference type="eggNOG" id="KOG0105">
    <property type="taxonomic scope" value="Eukaryota"/>
</dbReference>
<dbReference type="InParanoid" id="Q9XFR5"/>
<dbReference type="OMA" id="CSIAWPL"/>
<dbReference type="PhylomeDB" id="Q9XFR5"/>
<dbReference type="CD-CODE" id="9A8A194B">
    <property type="entry name" value="Nuclear speckle"/>
</dbReference>
<dbReference type="PRO" id="PR:Q9XFR5"/>
<dbReference type="Proteomes" id="UP000006548">
    <property type="component" value="Chromosome 1"/>
</dbReference>
<dbReference type="ExpressionAtlas" id="Q9XFR5">
    <property type="expression patterns" value="baseline and differential"/>
</dbReference>
<dbReference type="GO" id="GO:0005829">
    <property type="term" value="C:cytosol"/>
    <property type="evidence" value="ECO:0000314"/>
    <property type="project" value="TAIR"/>
</dbReference>
<dbReference type="GO" id="GO:0016607">
    <property type="term" value="C:nuclear speck"/>
    <property type="evidence" value="ECO:0007669"/>
    <property type="project" value="UniProtKB-SubCell"/>
</dbReference>
<dbReference type="GO" id="GO:0005634">
    <property type="term" value="C:nucleus"/>
    <property type="evidence" value="ECO:0000314"/>
    <property type="project" value="TAIR"/>
</dbReference>
<dbReference type="GO" id="GO:0005681">
    <property type="term" value="C:spliceosomal complex"/>
    <property type="evidence" value="ECO:0007669"/>
    <property type="project" value="UniProtKB-KW"/>
</dbReference>
<dbReference type="GO" id="GO:0003723">
    <property type="term" value="F:RNA binding"/>
    <property type="evidence" value="ECO:0007669"/>
    <property type="project" value="UniProtKB-KW"/>
</dbReference>
<dbReference type="GO" id="GO:0006397">
    <property type="term" value="P:mRNA processing"/>
    <property type="evidence" value="ECO:0007669"/>
    <property type="project" value="UniProtKB-KW"/>
</dbReference>
<dbReference type="GO" id="GO:0008380">
    <property type="term" value="P:RNA splicing"/>
    <property type="evidence" value="ECO:0007669"/>
    <property type="project" value="UniProtKB-KW"/>
</dbReference>
<dbReference type="CDD" id="cd12602">
    <property type="entry name" value="RRM2_SF2_plant_like"/>
    <property type="match status" value="1"/>
</dbReference>
<dbReference type="FunFam" id="3.30.70.330:FF:000410">
    <property type="entry name" value="ASF/SF2-like pre-mRNA splicing factor SRP31"/>
    <property type="match status" value="1"/>
</dbReference>
<dbReference type="FunFam" id="3.30.70.330:FF:000062">
    <property type="entry name" value="serine/arginine-rich splicing factor SR34A-like"/>
    <property type="match status" value="1"/>
</dbReference>
<dbReference type="Gene3D" id="3.30.70.330">
    <property type="match status" value="2"/>
</dbReference>
<dbReference type="InterPro" id="IPR012677">
    <property type="entry name" value="Nucleotide-bd_a/b_plait_sf"/>
</dbReference>
<dbReference type="InterPro" id="IPR035979">
    <property type="entry name" value="RBD_domain_sf"/>
</dbReference>
<dbReference type="InterPro" id="IPR000504">
    <property type="entry name" value="RRM_dom"/>
</dbReference>
<dbReference type="InterPro" id="IPR050374">
    <property type="entry name" value="RRT5_SRSF_SR"/>
</dbReference>
<dbReference type="PANTHER" id="PTHR23003">
    <property type="entry name" value="RNA RECOGNITION MOTIF RRM DOMAIN CONTAINING PROTEIN"/>
    <property type="match status" value="1"/>
</dbReference>
<dbReference type="PANTHER" id="PTHR23003:SF62">
    <property type="entry name" value="SERINE_ARGININE (SR)-TYPE SHUTTLING MRNA BINDING PROTEIN NPL3"/>
    <property type="match status" value="1"/>
</dbReference>
<dbReference type="Pfam" id="PF00076">
    <property type="entry name" value="RRM_1"/>
    <property type="match status" value="2"/>
</dbReference>
<dbReference type="SMART" id="SM00360">
    <property type="entry name" value="RRM"/>
    <property type="match status" value="2"/>
</dbReference>
<dbReference type="SUPFAM" id="SSF54928">
    <property type="entry name" value="RNA-binding domain, RBD"/>
    <property type="match status" value="1"/>
</dbReference>
<dbReference type="PROSITE" id="PS50102">
    <property type="entry name" value="RRM"/>
    <property type="match status" value="2"/>
</dbReference>